<reference key="1">
    <citation type="journal article" date="1999" name="Nature">
        <title>A new secreted protein that binds to Wnt proteins and inhibits their activities.</title>
        <authorList>
            <person name="Hsieh J.-C."/>
            <person name="Kodjabachian L."/>
            <person name="Rebbert M.L."/>
            <person name="Rattner A."/>
            <person name="Smallwood P.M."/>
            <person name="Samos C.H."/>
            <person name="Nusse R."/>
            <person name="Dawid I.B."/>
            <person name="Nathans J."/>
        </authorList>
    </citation>
    <scope>NUCLEOTIDE SEQUENCE [MRNA]</scope>
</reference>
<protein>
    <recommendedName>
        <fullName>Wnt inhibitory factor 1</fullName>
        <shortName>WIF-1</shortName>
    </recommendedName>
</protein>
<name>WIF1_DANRE</name>
<gene>
    <name type="primary">wif1</name>
</gene>
<evidence type="ECO:0000250" key="1"/>
<evidence type="ECO:0000255" key="2"/>
<evidence type="ECO:0000255" key="3">
    <source>
        <dbReference type="PROSITE-ProRule" id="PRU00076"/>
    </source>
</evidence>
<evidence type="ECO:0000255" key="4">
    <source>
        <dbReference type="PROSITE-ProRule" id="PRU00222"/>
    </source>
</evidence>
<evidence type="ECO:0000256" key="5">
    <source>
        <dbReference type="SAM" id="MobiDB-lite"/>
    </source>
</evidence>
<dbReference type="EMBL" id="AF122925">
    <property type="protein sequence ID" value="AAD25405.1"/>
    <property type="molecule type" value="mRNA"/>
</dbReference>
<dbReference type="PIR" id="B59180">
    <property type="entry name" value="B59180"/>
</dbReference>
<dbReference type="RefSeq" id="NP_571304.1">
    <property type="nucleotide sequence ID" value="NM_131229.1"/>
</dbReference>
<dbReference type="SMR" id="Q9W6F9"/>
<dbReference type="FunCoup" id="Q9W6F9">
    <property type="interactions" value="233"/>
</dbReference>
<dbReference type="STRING" id="7955.ENSDARP00000019818"/>
<dbReference type="GlyCosmos" id="Q9W6F9">
    <property type="glycosylation" value="2 sites, No reported glycans"/>
</dbReference>
<dbReference type="PaxDb" id="7955-ENSDARP00000019818"/>
<dbReference type="GeneID" id="30476"/>
<dbReference type="KEGG" id="dre:30476"/>
<dbReference type="AGR" id="ZFIN:ZDB-GENE-990712-17"/>
<dbReference type="CTD" id="11197"/>
<dbReference type="ZFIN" id="ZDB-GENE-990712-17">
    <property type="gene designation" value="wif1"/>
</dbReference>
<dbReference type="eggNOG" id="KOG1225">
    <property type="taxonomic scope" value="Eukaryota"/>
</dbReference>
<dbReference type="InParanoid" id="Q9W6F9"/>
<dbReference type="OrthoDB" id="10266706at2759"/>
<dbReference type="PhylomeDB" id="Q9W6F9"/>
<dbReference type="PRO" id="PR:Q9W6F9"/>
<dbReference type="Proteomes" id="UP000000437">
    <property type="component" value="Chromosome 4"/>
</dbReference>
<dbReference type="GO" id="GO:0009986">
    <property type="term" value="C:cell surface"/>
    <property type="evidence" value="ECO:0000318"/>
    <property type="project" value="GO_Central"/>
</dbReference>
<dbReference type="GO" id="GO:0005576">
    <property type="term" value="C:extracellular region"/>
    <property type="evidence" value="ECO:0000318"/>
    <property type="project" value="GO_Central"/>
</dbReference>
<dbReference type="GO" id="GO:0005102">
    <property type="term" value="F:signaling receptor binding"/>
    <property type="evidence" value="ECO:0000318"/>
    <property type="project" value="GO_Central"/>
</dbReference>
<dbReference type="GO" id="GO:0021986">
    <property type="term" value="P:habenula development"/>
    <property type="evidence" value="ECO:0000315"/>
    <property type="project" value="ZFIN"/>
</dbReference>
<dbReference type="GO" id="GO:0090090">
    <property type="term" value="P:negative regulation of canonical Wnt signaling pathway"/>
    <property type="evidence" value="ECO:0000314"/>
    <property type="project" value="ZFIN"/>
</dbReference>
<dbReference type="GO" id="GO:0060828">
    <property type="term" value="P:regulation of canonical Wnt signaling pathway"/>
    <property type="evidence" value="ECO:0000315"/>
    <property type="project" value="ZFIN"/>
</dbReference>
<dbReference type="GO" id="GO:0048794">
    <property type="term" value="P:swim bladder development"/>
    <property type="evidence" value="ECO:0000315"/>
    <property type="project" value="ZFIN"/>
</dbReference>
<dbReference type="GO" id="GO:0016055">
    <property type="term" value="P:Wnt signaling pathway"/>
    <property type="evidence" value="ECO:0007669"/>
    <property type="project" value="UniProtKB-KW"/>
</dbReference>
<dbReference type="FunFam" id="2.60.40.2170:FF:000001">
    <property type="entry name" value="WNT inhibitory factor 1"/>
    <property type="match status" value="1"/>
</dbReference>
<dbReference type="FunFam" id="2.10.25.10:FF:000295">
    <property type="entry name" value="Wnt inhibitory factor 1"/>
    <property type="match status" value="1"/>
</dbReference>
<dbReference type="Gene3D" id="2.10.25.10">
    <property type="entry name" value="Laminin"/>
    <property type="match status" value="2"/>
</dbReference>
<dbReference type="Gene3D" id="2.60.40.2170">
    <property type="entry name" value="Wnt, WIF domain"/>
    <property type="match status" value="1"/>
</dbReference>
<dbReference type="InterPro" id="IPR050969">
    <property type="entry name" value="Dev_Signal_Modulators"/>
</dbReference>
<dbReference type="InterPro" id="IPR013032">
    <property type="entry name" value="EGF-like_CS"/>
</dbReference>
<dbReference type="InterPro" id="IPR000742">
    <property type="entry name" value="EGF-like_dom"/>
</dbReference>
<dbReference type="InterPro" id="IPR003306">
    <property type="entry name" value="WIF"/>
</dbReference>
<dbReference type="InterPro" id="IPR038677">
    <property type="entry name" value="WIF_sf"/>
</dbReference>
<dbReference type="InterPro" id="IPR013309">
    <property type="entry name" value="Wnt-inh"/>
</dbReference>
<dbReference type="PANTHER" id="PTHR14949:SF56">
    <property type="entry name" value="EGF-LIKE-DOMAIN, MULTIPLE 7"/>
    <property type="match status" value="1"/>
</dbReference>
<dbReference type="PANTHER" id="PTHR14949">
    <property type="entry name" value="EGF-LIKE-DOMAIN, MULTIPLE 7, 8"/>
    <property type="match status" value="1"/>
</dbReference>
<dbReference type="Pfam" id="PF21700">
    <property type="entry name" value="EGF_DL_JAG"/>
    <property type="match status" value="1"/>
</dbReference>
<dbReference type="Pfam" id="PF12661">
    <property type="entry name" value="hEGF"/>
    <property type="match status" value="2"/>
</dbReference>
<dbReference type="Pfam" id="PF02019">
    <property type="entry name" value="WIF"/>
    <property type="match status" value="1"/>
</dbReference>
<dbReference type="PRINTS" id="PR01901">
    <property type="entry name" value="WIFPROTEIN"/>
</dbReference>
<dbReference type="SMART" id="SM00181">
    <property type="entry name" value="EGF"/>
    <property type="match status" value="5"/>
</dbReference>
<dbReference type="SMART" id="SM00469">
    <property type="entry name" value="WIF"/>
    <property type="match status" value="1"/>
</dbReference>
<dbReference type="SUPFAM" id="SSF57196">
    <property type="entry name" value="EGF/Laminin"/>
    <property type="match status" value="1"/>
</dbReference>
<dbReference type="PROSITE" id="PS00022">
    <property type="entry name" value="EGF_1"/>
    <property type="match status" value="5"/>
</dbReference>
<dbReference type="PROSITE" id="PS01186">
    <property type="entry name" value="EGF_2"/>
    <property type="match status" value="4"/>
</dbReference>
<dbReference type="PROSITE" id="PS50026">
    <property type="entry name" value="EGF_3"/>
    <property type="match status" value="4"/>
</dbReference>
<dbReference type="PROSITE" id="PS50814">
    <property type="entry name" value="WIF"/>
    <property type="match status" value="1"/>
</dbReference>
<keyword id="KW-0217">Developmental protein</keyword>
<keyword id="KW-1015">Disulfide bond</keyword>
<keyword id="KW-0245">EGF-like domain</keyword>
<keyword id="KW-0325">Glycoprotein</keyword>
<keyword id="KW-1185">Reference proteome</keyword>
<keyword id="KW-0677">Repeat</keyword>
<keyword id="KW-0964">Secreted</keyword>
<keyword id="KW-0732">Signal</keyword>
<keyword id="KW-0879">Wnt signaling pathway</keyword>
<accession>Q9W6F9</accession>
<organism>
    <name type="scientific">Danio rerio</name>
    <name type="common">Zebrafish</name>
    <name type="synonym">Brachydanio rerio</name>
    <dbReference type="NCBI Taxonomy" id="7955"/>
    <lineage>
        <taxon>Eukaryota</taxon>
        <taxon>Metazoa</taxon>
        <taxon>Chordata</taxon>
        <taxon>Craniata</taxon>
        <taxon>Vertebrata</taxon>
        <taxon>Euteleostomi</taxon>
        <taxon>Actinopterygii</taxon>
        <taxon>Neopterygii</taxon>
        <taxon>Teleostei</taxon>
        <taxon>Ostariophysi</taxon>
        <taxon>Cypriniformes</taxon>
        <taxon>Danionidae</taxon>
        <taxon>Danioninae</taxon>
        <taxon>Danio</taxon>
    </lineage>
</organism>
<comment type="function">
    <text>Binds to WNT proteins and inhibits their activities. May be involved in mesoderm segmentation.</text>
</comment>
<comment type="subcellular location">
    <subcellularLocation>
        <location>Secreted</location>
    </subcellularLocation>
</comment>
<comment type="tissue specificity">
    <text>Highly expressed in unsegmented paraxial mesoderm.</text>
</comment>
<sequence>MAFRTPAVQLHLKACVLLLLGGLLEAAYQERGTMYMWIDANQARILIGFEEDILIVSEGKMAPFTHDFRKAQQRMPAIPVNIHHVNFTWQATDQAEYFYEFQTLRSLDKDIMDDPTVNVPLLGSVPHKASVVQVGFPCRGDQDGVAAFEVTILVMDAGGNIILRTPHNAIFFKTCQRAKCPGGCRNGGYCNERQVCECQDGFYGVHCEKALCSPRCLNGGLCMSPGVCICPPGYFGSSCERANCSTTCLNGGTCFHPGKCICAVSFEGVRCELSKCRQPCRNGGKCTGRNKCKCSKGYHGDLCSKAVCEPSCGAHGTCVEPNRCQCREGWHGRHCNKRFRGGVSNSQRVSPSKHKSPSVAAAKEAPETSQPSETNYVV</sequence>
<feature type="signal peptide" evidence="2">
    <location>
        <begin position="1"/>
        <end position="28"/>
    </location>
</feature>
<feature type="chain" id="PRO_0000007779" description="Wnt inhibitory factor 1">
    <location>
        <begin position="29"/>
        <end position="378"/>
    </location>
</feature>
<feature type="domain" description="WIF" evidence="4">
    <location>
        <begin position="36"/>
        <end position="175"/>
    </location>
</feature>
<feature type="domain" description="EGF-like 1" evidence="3">
    <location>
        <begin position="176"/>
        <end position="205"/>
    </location>
</feature>
<feature type="domain" description="EGF-like 2" evidence="3">
    <location>
        <begin position="208"/>
        <end position="240"/>
    </location>
</feature>
<feature type="domain" description="EGF-like 3" evidence="3">
    <location>
        <begin position="243"/>
        <end position="272"/>
    </location>
</feature>
<feature type="domain" description="EGF-like 4" evidence="3">
    <location>
        <begin position="272"/>
        <end position="304"/>
    </location>
</feature>
<feature type="domain" description="EGF-like 5" evidence="3">
    <location>
        <begin position="305"/>
        <end position="336"/>
    </location>
</feature>
<feature type="region of interest" description="Disordered" evidence="5">
    <location>
        <begin position="343"/>
        <end position="378"/>
    </location>
</feature>
<feature type="compositionally biased region" description="Polar residues" evidence="5">
    <location>
        <begin position="367"/>
        <end position="378"/>
    </location>
</feature>
<feature type="glycosylation site" description="N-linked (GlcNAc...) asparagine" evidence="2">
    <location>
        <position position="86"/>
    </location>
</feature>
<feature type="glycosylation site" description="N-linked (GlcNAc...) asparagine" evidence="2">
    <location>
        <position position="243"/>
    </location>
</feature>
<feature type="disulfide bond" evidence="1">
    <location>
        <begin position="138"/>
        <end position="175"/>
    </location>
</feature>
<feature type="disulfide bond" evidence="1">
    <location>
        <begin position="180"/>
        <end position="190"/>
    </location>
</feature>
<feature type="disulfide bond" evidence="1">
    <location>
        <begin position="184"/>
        <end position="196"/>
    </location>
</feature>
<feature type="disulfide bond" evidence="1">
    <location>
        <begin position="212"/>
        <end position="222"/>
    </location>
</feature>
<feature type="disulfide bond" evidence="1">
    <location>
        <begin position="216"/>
        <end position="228"/>
    </location>
</feature>
<feature type="disulfide bond" evidence="1">
    <location>
        <begin position="230"/>
        <end position="239"/>
    </location>
</feature>
<feature type="disulfide bond" evidence="1">
    <location>
        <begin position="244"/>
        <end position="254"/>
    </location>
</feature>
<feature type="disulfide bond" evidence="1">
    <location>
        <begin position="248"/>
        <end position="260"/>
    </location>
</feature>
<feature type="disulfide bond" evidence="1">
    <location>
        <begin position="262"/>
        <end position="271"/>
    </location>
</feature>
<feature type="disulfide bond" evidence="1">
    <location>
        <begin position="276"/>
        <end position="286"/>
    </location>
</feature>
<feature type="disulfide bond" evidence="1">
    <location>
        <begin position="280"/>
        <end position="292"/>
    </location>
</feature>
<feature type="disulfide bond" evidence="1">
    <location>
        <begin position="294"/>
        <end position="303"/>
    </location>
</feature>
<feature type="disulfide bond" evidence="1">
    <location>
        <begin position="308"/>
        <end position="318"/>
    </location>
</feature>
<feature type="disulfide bond" evidence="1">
    <location>
        <begin position="312"/>
        <end position="324"/>
    </location>
</feature>
<feature type="disulfide bond" evidence="1">
    <location>
        <begin position="326"/>
        <end position="335"/>
    </location>
</feature>
<proteinExistence type="evidence at transcript level"/>